<protein>
    <recommendedName>
        <fullName evidence="1">Orotidine 5'-phosphate decarboxylase</fullName>
        <ecNumber evidence="1">4.1.1.23</ecNumber>
    </recommendedName>
    <alternativeName>
        <fullName evidence="1">OMP decarboxylase</fullName>
        <shortName evidence="1">OMPDCase</shortName>
        <shortName evidence="1">OMPdecase</shortName>
    </alternativeName>
</protein>
<sequence>MSGFGDRLAGATARRGPLCLGIDPHPELLRAWGLGTDAAGLAGFSDICVAAFAGFAVVKPQVAFFEAYGSAGYAVLERTIAALRESGVLVLADAKRGDIGSTMAAYASAWAGDSPLAADAVTASPYLGFGSLQPLLDTAREHDRGVFVLAATSNPEGASVQCAVAPGAIPGRTVAQAIVDAAAEVNAGAARGSVGVVVGATLSAPPDVSALNGPVLVPGVGAQGGRPEALAGLGGARRGQLLPAVSREVLRAGPDVAALRAAAERMRDAVAYLGENP</sequence>
<reference key="1">
    <citation type="submission" date="2006-12" db="EMBL/GenBank/DDBJ databases">
        <title>Complete sequence of Mycobacterium vanbaalenii PYR-1.</title>
        <authorList>
            <consortium name="US DOE Joint Genome Institute"/>
            <person name="Copeland A."/>
            <person name="Lucas S."/>
            <person name="Lapidus A."/>
            <person name="Barry K."/>
            <person name="Detter J.C."/>
            <person name="Glavina del Rio T."/>
            <person name="Hammon N."/>
            <person name="Israni S."/>
            <person name="Dalin E."/>
            <person name="Tice H."/>
            <person name="Pitluck S."/>
            <person name="Singan V."/>
            <person name="Schmutz J."/>
            <person name="Larimer F."/>
            <person name="Land M."/>
            <person name="Hauser L."/>
            <person name="Kyrpides N."/>
            <person name="Anderson I.J."/>
            <person name="Miller C."/>
            <person name="Richardson P."/>
        </authorList>
    </citation>
    <scope>NUCLEOTIDE SEQUENCE [LARGE SCALE GENOMIC DNA]</scope>
    <source>
        <strain>DSM 7251 / JCM 13017 / BCRC 16820 / KCTC 9966 / NRRL B-24157 / PYR-1</strain>
    </source>
</reference>
<name>PYRF_MYCVP</name>
<organism>
    <name type="scientific">Mycolicibacterium vanbaalenii (strain DSM 7251 / JCM 13017 / BCRC 16820 / KCTC 9966 / NRRL B-24157 / PYR-1)</name>
    <name type="common">Mycobacterium vanbaalenii</name>
    <dbReference type="NCBI Taxonomy" id="350058"/>
    <lineage>
        <taxon>Bacteria</taxon>
        <taxon>Bacillati</taxon>
        <taxon>Actinomycetota</taxon>
        <taxon>Actinomycetes</taxon>
        <taxon>Mycobacteriales</taxon>
        <taxon>Mycobacteriaceae</taxon>
        <taxon>Mycolicibacterium</taxon>
    </lineage>
</organism>
<keyword id="KW-0210">Decarboxylase</keyword>
<keyword id="KW-0456">Lyase</keyword>
<keyword id="KW-0665">Pyrimidine biosynthesis</keyword>
<comment type="catalytic activity">
    <reaction evidence="1">
        <text>orotidine 5'-phosphate + H(+) = UMP + CO2</text>
        <dbReference type="Rhea" id="RHEA:11596"/>
        <dbReference type="ChEBI" id="CHEBI:15378"/>
        <dbReference type="ChEBI" id="CHEBI:16526"/>
        <dbReference type="ChEBI" id="CHEBI:57538"/>
        <dbReference type="ChEBI" id="CHEBI:57865"/>
        <dbReference type="EC" id="4.1.1.23"/>
    </reaction>
</comment>
<comment type="pathway">
    <text evidence="1">Pyrimidine metabolism; UMP biosynthesis via de novo pathway; UMP from orotate: step 2/2.</text>
</comment>
<comment type="similarity">
    <text evidence="1">Belongs to the OMP decarboxylase family. Type 2 subfamily.</text>
</comment>
<evidence type="ECO:0000255" key="1">
    <source>
        <dbReference type="HAMAP-Rule" id="MF_01215"/>
    </source>
</evidence>
<gene>
    <name evidence="1" type="primary">pyrF</name>
    <name type="ordered locus">Mvan_2665</name>
</gene>
<dbReference type="EC" id="4.1.1.23" evidence="1"/>
<dbReference type="EMBL" id="CP000511">
    <property type="protein sequence ID" value="ABM13472.1"/>
    <property type="molecule type" value="Genomic_DNA"/>
</dbReference>
<dbReference type="RefSeq" id="WP_011779881.1">
    <property type="nucleotide sequence ID" value="NZ_JACKSD010000003.1"/>
</dbReference>
<dbReference type="SMR" id="A1T8H2"/>
<dbReference type="STRING" id="350058.Mvan_2665"/>
<dbReference type="KEGG" id="mva:Mvan_2665"/>
<dbReference type="eggNOG" id="COG0284">
    <property type="taxonomic scope" value="Bacteria"/>
</dbReference>
<dbReference type="HOGENOM" id="CLU_060704_0_0_11"/>
<dbReference type="UniPathway" id="UPA00070">
    <property type="reaction ID" value="UER00120"/>
</dbReference>
<dbReference type="Proteomes" id="UP000009159">
    <property type="component" value="Chromosome"/>
</dbReference>
<dbReference type="GO" id="GO:0004590">
    <property type="term" value="F:orotidine-5'-phosphate decarboxylase activity"/>
    <property type="evidence" value="ECO:0007669"/>
    <property type="project" value="UniProtKB-UniRule"/>
</dbReference>
<dbReference type="GO" id="GO:0006207">
    <property type="term" value="P:'de novo' pyrimidine nucleobase biosynthetic process"/>
    <property type="evidence" value="ECO:0007669"/>
    <property type="project" value="InterPro"/>
</dbReference>
<dbReference type="GO" id="GO:0044205">
    <property type="term" value="P:'de novo' UMP biosynthetic process"/>
    <property type="evidence" value="ECO:0007669"/>
    <property type="project" value="UniProtKB-UniRule"/>
</dbReference>
<dbReference type="CDD" id="cd04725">
    <property type="entry name" value="OMP_decarboxylase_like"/>
    <property type="match status" value="1"/>
</dbReference>
<dbReference type="Gene3D" id="3.20.20.70">
    <property type="entry name" value="Aldolase class I"/>
    <property type="match status" value="1"/>
</dbReference>
<dbReference type="HAMAP" id="MF_01215">
    <property type="entry name" value="OMPdecase_type2"/>
    <property type="match status" value="1"/>
</dbReference>
<dbReference type="InterPro" id="IPR013785">
    <property type="entry name" value="Aldolase_TIM"/>
</dbReference>
<dbReference type="InterPro" id="IPR018089">
    <property type="entry name" value="OMPdecase_AS"/>
</dbReference>
<dbReference type="InterPro" id="IPR011995">
    <property type="entry name" value="OMPdecase_type-2"/>
</dbReference>
<dbReference type="InterPro" id="IPR001754">
    <property type="entry name" value="OMPdeCOase_dom"/>
</dbReference>
<dbReference type="InterPro" id="IPR011060">
    <property type="entry name" value="RibuloseP-bd_barrel"/>
</dbReference>
<dbReference type="NCBIfam" id="TIGR02127">
    <property type="entry name" value="pyrF_sub2"/>
    <property type="match status" value="1"/>
</dbReference>
<dbReference type="PANTHER" id="PTHR43375">
    <property type="entry name" value="OROTIDINE 5'-PHOSPHATE DECARBOXYLASE"/>
    <property type="match status" value="1"/>
</dbReference>
<dbReference type="PANTHER" id="PTHR43375:SF1">
    <property type="entry name" value="OROTIDINE 5'-PHOSPHATE DECARBOXYLASE"/>
    <property type="match status" value="1"/>
</dbReference>
<dbReference type="Pfam" id="PF00215">
    <property type="entry name" value="OMPdecase"/>
    <property type="match status" value="1"/>
</dbReference>
<dbReference type="SMART" id="SM00934">
    <property type="entry name" value="OMPdecase"/>
    <property type="match status" value="1"/>
</dbReference>
<dbReference type="SUPFAM" id="SSF51366">
    <property type="entry name" value="Ribulose-phoshate binding barrel"/>
    <property type="match status" value="1"/>
</dbReference>
<dbReference type="PROSITE" id="PS00156">
    <property type="entry name" value="OMPDECASE"/>
    <property type="match status" value="1"/>
</dbReference>
<feature type="chain" id="PRO_1000066481" description="Orotidine 5'-phosphate decarboxylase">
    <location>
        <begin position="1"/>
        <end position="277"/>
    </location>
</feature>
<feature type="active site" description="Proton donor" evidence="1">
    <location>
        <position position="95"/>
    </location>
</feature>
<accession>A1T8H2</accession>
<proteinExistence type="inferred from homology"/>